<dbReference type="EMBL" id="BX571857">
    <property type="protein sequence ID" value="CAG44260.1"/>
    <property type="molecule type" value="Genomic_DNA"/>
</dbReference>
<dbReference type="RefSeq" id="WP_000076661.1">
    <property type="nucleotide sequence ID" value="NC_002953.3"/>
</dbReference>
<dbReference type="SMR" id="Q6G6B6"/>
<dbReference type="KEGG" id="sas:SAS2444"/>
<dbReference type="HOGENOM" id="CLU_134973_10_4_9"/>
<dbReference type="GO" id="GO:0005737">
    <property type="term" value="C:cytoplasm"/>
    <property type="evidence" value="ECO:0007669"/>
    <property type="project" value="UniProtKB-SubCell"/>
</dbReference>
<dbReference type="GO" id="GO:0005507">
    <property type="term" value="F:copper ion binding"/>
    <property type="evidence" value="ECO:0007669"/>
    <property type="project" value="InterPro"/>
</dbReference>
<dbReference type="CDD" id="cd00371">
    <property type="entry name" value="HMA"/>
    <property type="match status" value="1"/>
</dbReference>
<dbReference type="FunFam" id="3.30.70.100:FF:000005">
    <property type="entry name" value="Copper-exporting P-type ATPase A"/>
    <property type="match status" value="1"/>
</dbReference>
<dbReference type="Gene3D" id="3.30.70.100">
    <property type="match status" value="1"/>
</dbReference>
<dbReference type="InterPro" id="IPR049740">
    <property type="entry name" value="CopZ"/>
</dbReference>
<dbReference type="InterPro" id="IPR017969">
    <property type="entry name" value="Heavy-metal-associated_CS"/>
</dbReference>
<dbReference type="InterPro" id="IPR006122">
    <property type="entry name" value="HMA_Cu_ion-bd"/>
</dbReference>
<dbReference type="InterPro" id="IPR006121">
    <property type="entry name" value="HMA_dom"/>
</dbReference>
<dbReference type="InterPro" id="IPR036163">
    <property type="entry name" value="HMA_dom_sf"/>
</dbReference>
<dbReference type="InterPro" id="IPR001802">
    <property type="entry name" value="MerP/CopZ"/>
</dbReference>
<dbReference type="NCBIfam" id="NF033795">
    <property type="entry name" value="chaper_CopZ_Bs"/>
    <property type="match status" value="1"/>
</dbReference>
<dbReference type="NCBIfam" id="TIGR00003">
    <property type="entry name" value="copper ion binding protein"/>
    <property type="match status" value="1"/>
</dbReference>
<dbReference type="PANTHER" id="PTHR46594">
    <property type="entry name" value="P-TYPE CATION-TRANSPORTING ATPASE"/>
    <property type="match status" value="1"/>
</dbReference>
<dbReference type="PANTHER" id="PTHR46594:SF4">
    <property type="entry name" value="P-TYPE CATION-TRANSPORTING ATPASE"/>
    <property type="match status" value="1"/>
</dbReference>
<dbReference type="Pfam" id="PF00403">
    <property type="entry name" value="HMA"/>
    <property type="match status" value="1"/>
</dbReference>
<dbReference type="PRINTS" id="PR00946">
    <property type="entry name" value="HGSCAVENGER"/>
</dbReference>
<dbReference type="SUPFAM" id="SSF55008">
    <property type="entry name" value="HMA, heavy metal-associated domain"/>
    <property type="match status" value="1"/>
</dbReference>
<dbReference type="PROSITE" id="PS01047">
    <property type="entry name" value="HMA_1"/>
    <property type="match status" value="1"/>
</dbReference>
<dbReference type="PROSITE" id="PS50846">
    <property type="entry name" value="HMA_2"/>
    <property type="match status" value="1"/>
</dbReference>
<keyword id="KW-0143">Chaperone</keyword>
<keyword id="KW-0186">Copper</keyword>
<keyword id="KW-0963">Cytoplasm</keyword>
<keyword id="KW-0479">Metal-binding</keyword>
<evidence type="ECO:0000250" key="1"/>
<evidence type="ECO:0000255" key="2">
    <source>
        <dbReference type="PROSITE-ProRule" id="PRU00280"/>
    </source>
</evidence>
<reference key="1">
    <citation type="journal article" date="2004" name="Proc. Natl. Acad. Sci. U.S.A.">
        <title>Complete genomes of two clinical Staphylococcus aureus strains: evidence for the rapid evolution of virulence and drug resistance.</title>
        <authorList>
            <person name="Holden M.T.G."/>
            <person name="Feil E.J."/>
            <person name="Lindsay J.A."/>
            <person name="Peacock S.J."/>
            <person name="Day N.P.J."/>
            <person name="Enright M.C."/>
            <person name="Foster T.J."/>
            <person name="Moore C.E."/>
            <person name="Hurst L."/>
            <person name="Atkin R."/>
            <person name="Barron A."/>
            <person name="Bason N."/>
            <person name="Bentley S.D."/>
            <person name="Chillingworth C."/>
            <person name="Chillingworth T."/>
            <person name="Churcher C."/>
            <person name="Clark L."/>
            <person name="Corton C."/>
            <person name="Cronin A."/>
            <person name="Doggett J."/>
            <person name="Dowd L."/>
            <person name="Feltwell T."/>
            <person name="Hance Z."/>
            <person name="Harris B."/>
            <person name="Hauser H."/>
            <person name="Holroyd S."/>
            <person name="Jagels K."/>
            <person name="James K.D."/>
            <person name="Lennard N."/>
            <person name="Line A."/>
            <person name="Mayes R."/>
            <person name="Moule S."/>
            <person name="Mungall K."/>
            <person name="Ormond D."/>
            <person name="Quail M.A."/>
            <person name="Rabbinowitsch E."/>
            <person name="Rutherford K.M."/>
            <person name="Sanders M."/>
            <person name="Sharp S."/>
            <person name="Simmonds M."/>
            <person name="Stevens K."/>
            <person name="Whitehead S."/>
            <person name="Barrell B.G."/>
            <person name="Spratt B.G."/>
            <person name="Parkhill J."/>
        </authorList>
    </citation>
    <scope>NUCLEOTIDE SEQUENCE [LARGE SCALE GENOMIC DNA]</scope>
    <source>
        <strain>MSSA476</strain>
    </source>
</reference>
<feature type="chain" id="PRO_0000351275" description="Copper chaperone CopZ">
    <location>
        <begin position="1"/>
        <end position="68"/>
    </location>
</feature>
<feature type="domain" description="HMA" evidence="2">
    <location>
        <begin position="2"/>
        <end position="68"/>
    </location>
</feature>
<feature type="binding site" evidence="2">
    <location>
        <position position="13"/>
    </location>
    <ligand>
        <name>Cu cation</name>
        <dbReference type="ChEBI" id="CHEBI:23378"/>
    </ligand>
</feature>
<feature type="binding site" evidence="2">
    <location>
        <position position="16"/>
    </location>
    <ligand>
        <name>Cu cation</name>
        <dbReference type="ChEBI" id="CHEBI:23378"/>
    </ligand>
</feature>
<name>COPZ_STAAS</name>
<accession>Q6G6B6</accession>
<comment type="function">
    <text evidence="1">Chaperone that serves for the intracellular sequestration and transport of Cu(+). Delivers Cu(+) to the copper-exporting P-type ATPase A (CopA) (By similarity).</text>
</comment>
<comment type="subcellular location">
    <subcellularLocation>
        <location evidence="1">Cytoplasm</location>
    </subcellularLocation>
</comment>
<gene>
    <name type="primary">copZ</name>
    <name type="ordered locus">SAS2444</name>
</gene>
<sequence length="68" mass="7237">MSQEILNVEGMSCGHCKSAVESALNNIDGVTSADVNLENGQVSVQYDDSKVAVSQMKDAIEDQGYDVV</sequence>
<protein>
    <recommendedName>
        <fullName>Copper chaperone CopZ</fullName>
    </recommendedName>
</protein>
<proteinExistence type="inferred from homology"/>
<organism>
    <name type="scientific">Staphylococcus aureus (strain MSSA476)</name>
    <dbReference type="NCBI Taxonomy" id="282459"/>
    <lineage>
        <taxon>Bacteria</taxon>
        <taxon>Bacillati</taxon>
        <taxon>Bacillota</taxon>
        <taxon>Bacilli</taxon>
        <taxon>Bacillales</taxon>
        <taxon>Staphylococcaceae</taxon>
        <taxon>Staphylococcus</taxon>
    </lineage>
</organism>